<feature type="chain" id="PRO_1000007571" description="Large ribosomal subunit protein uL29">
    <location>
        <begin position="1"/>
        <end position="65"/>
    </location>
</feature>
<evidence type="ECO:0000255" key="1">
    <source>
        <dbReference type="HAMAP-Rule" id="MF_00374"/>
    </source>
</evidence>
<evidence type="ECO:0000305" key="2"/>
<reference key="1">
    <citation type="journal article" date="2010" name="Appl. Environ. Microbiol.">
        <title>The genome sequence of Psychrobacter arcticus 273-4, a psychroactive Siberian permafrost bacterium, reveals mechanisms for adaptation to low-temperature growth.</title>
        <authorList>
            <person name="Ayala-del-Rio H.L."/>
            <person name="Chain P.S."/>
            <person name="Grzymski J.J."/>
            <person name="Ponder M.A."/>
            <person name="Ivanova N."/>
            <person name="Bergholz P.W."/>
            <person name="Di Bartolo G."/>
            <person name="Hauser L."/>
            <person name="Land M."/>
            <person name="Bakermans C."/>
            <person name="Rodrigues D."/>
            <person name="Klappenbach J."/>
            <person name="Zarka D."/>
            <person name="Larimer F."/>
            <person name="Richardson P."/>
            <person name="Murray A."/>
            <person name="Thomashow M."/>
            <person name="Tiedje J.M."/>
        </authorList>
    </citation>
    <scope>NUCLEOTIDE SEQUENCE [LARGE SCALE GENOMIC DNA]</scope>
    <source>
        <strain>DSM 17307 / VKM B-2377 / 273-4</strain>
    </source>
</reference>
<gene>
    <name evidence="1" type="primary">rpmC</name>
    <name type="ordered locus">Psyc_0497</name>
</gene>
<name>RL29_PSYA2</name>
<accession>Q4FUE8</accession>
<dbReference type="EMBL" id="CP000082">
    <property type="protein sequence ID" value="AAZ18360.1"/>
    <property type="molecule type" value="Genomic_DNA"/>
</dbReference>
<dbReference type="RefSeq" id="WP_011279794.1">
    <property type="nucleotide sequence ID" value="NC_007204.1"/>
</dbReference>
<dbReference type="SMR" id="Q4FUE8"/>
<dbReference type="STRING" id="259536.Psyc_0497"/>
<dbReference type="GeneID" id="60255479"/>
<dbReference type="KEGG" id="par:Psyc_0497"/>
<dbReference type="eggNOG" id="COG0255">
    <property type="taxonomic scope" value="Bacteria"/>
</dbReference>
<dbReference type="HOGENOM" id="CLU_158491_1_2_6"/>
<dbReference type="OrthoDB" id="9815192at2"/>
<dbReference type="Proteomes" id="UP000000546">
    <property type="component" value="Chromosome"/>
</dbReference>
<dbReference type="GO" id="GO:1990904">
    <property type="term" value="C:ribonucleoprotein complex"/>
    <property type="evidence" value="ECO:0007669"/>
    <property type="project" value="UniProtKB-KW"/>
</dbReference>
<dbReference type="GO" id="GO:0005840">
    <property type="term" value="C:ribosome"/>
    <property type="evidence" value="ECO:0007669"/>
    <property type="project" value="UniProtKB-KW"/>
</dbReference>
<dbReference type="GO" id="GO:0003735">
    <property type="term" value="F:structural constituent of ribosome"/>
    <property type="evidence" value="ECO:0007669"/>
    <property type="project" value="InterPro"/>
</dbReference>
<dbReference type="GO" id="GO:0006412">
    <property type="term" value="P:translation"/>
    <property type="evidence" value="ECO:0007669"/>
    <property type="project" value="UniProtKB-UniRule"/>
</dbReference>
<dbReference type="CDD" id="cd00427">
    <property type="entry name" value="Ribosomal_L29_HIP"/>
    <property type="match status" value="1"/>
</dbReference>
<dbReference type="FunFam" id="1.10.287.310:FF:000001">
    <property type="entry name" value="50S ribosomal protein L29"/>
    <property type="match status" value="1"/>
</dbReference>
<dbReference type="Gene3D" id="1.10.287.310">
    <property type="match status" value="1"/>
</dbReference>
<dbReference type="HAMAP" id="MF_00374">
    <property type="entry name" value="Ribosomal_uL29"/>
    <property type="match status" value="1"/>
</dbReference>
<dbReference type="InterPro" id="IPR001854">
    <property type="entry name" value="Ribosomal_uL29"/>
</dbReference>
<dbReference type="InterPro" id="IPR036049">
    <property type="entry name" value="Ribosomal_uL29_sf"/>
</dbReference>
<dbReference type="NCBIfam" id="TIGR00012">
    <property type="entry name" value="L29"/>
    <property type="match status" value="1"/>
</dbReference>
<dbReference type="Pfam" id="PF00831">
    <property type="entry name" value="Ribosomal_L29"/>
    <property type="match status" value="1"/>
</dbReference>
<dbReference type="SUPFAM" id="SSF46561">
    <property type="entry name" value="Ribosomal protein L29 (L29p)"/>
    <property type="match status" value="1"/>
</dbReference>
<comment type="similarity">
    <text evidence="1">Belongs to the universal ribosomal protein uL29 family.</text>
</comment>
<keyword id="KW-1185">Reference proteome</keyword>
<keyword id="KW-0687">Ribonucleoprotein</keyword>
<keyword id="KW-0689">Ribosomal protein</keyword>
<protein>
    <recommendedName>
        <fullName evidence="1">Large ribosomal subunit protein uL29</fullName>
    </recommendedName>
    <alternativeName>
        <fullName evidence="2">50S ribosomal protein L29</fullName>
    </alternativeName>
</protein>
<proteinExistence type="inferred from homology"/>
<sequence length="65" mass="7507">MKISELRDKSLEELTQLLDEKQLDAFRIRMAKATGQLGNTHEVRVNRRAIAQLQTLINEKQRGDS</sequence>
<organism>
    <name type="scientific">Psychrobacter arcticus (strain DSM 17307 / VKM B-2377 / 273-4)</name>
    <dbReference type="NCBI Taxonomy" id="259536"/>
    <lineage>
        <taxon>Bacteria</taxon>
        <taxon>Pseudomonadati</taxon>
        <taxon>Pseudomonadota</taxon>
        <taxon>Gammaproteobacteria</taxon>
        <taxon>Moraxellales</taxon>
        <taxon>Moraxellaceae</taxon>
        <taxon>Psychrobacter</taxon>
    </lineage>
</organism>